<sequence length="240" mass="26131">MLLQSQTMGVSHSFTPKGITIPQREKPGHMYQNEDYLQNGLPTETTVLGTVQILCCLLISSLGAILVFAPYPSHFNPAISTTLMSGYPFLGALCFGITGSLSIISGKQSTKPFDLSSLTSNAVSSVTAGAGLFLLADSMVALRTASQHCGSEMDYLSSLPYSEYYYPIYEIKDCLLTSVSLTGVLVVMLIFTVLELLLAAYSSVFWWKQLYSNNPGSSFSSTQSQDHIQQVKKSSSRSWI</sequence>
<reference key="1">
    <citation type="journal article" date="2001" name="Gene">
        <title>Identification of a new multigene four-transmembrane family (MS4A) related to CD20, HTm4 and beta subunit of the high-affinity IgE receptor.</title>
        <authorList>
            <person name="Ishibashi K."/>
            <person name="Suzuki M."/>
            <person name="Sasaki S."/>
            <person name="Imai M."/>
        </authorList>
    </citation>
    <scope>NUCLEOTIDE SEQUENCE [MRNA] (ISOFORM 1)</scope>
</reference>
<reference key="2">
    <citation type="journal article" date="2001" name="Immunogenetics">
        <title>CFFM4: a new member of the CD20/Fc-epsilon-RI-beta-family.</title>
        <authorList>
            <person name="Gingras M.-C."/>
            <person name="Lapillonne H."/>
            <person name="Margolin J.F."/>
        </authorList>
    </citation>
    <scope>NUCLEOTIDE SEQUENCE [MRNA] (ISOFORM 1)</scope>
    <source>
        <tissue>Peripheral blood</tissue>
    </source>
</reference>
<reference key="3">
    <citation type="journal article" date="2001" name="Genomics">
        <title>Identification of a CD20-, Fc-epsilon-RI-beta-, and HTm4-related gene family: sixteen new MS4A family members expressed in human and mouse.</title>
        <authorList>
            <person name="Liang Y."/>
            <person name="Tedder T.F."/>
        </authorList>
    </citation>
    <scope>NUCLEOTIDE SEQUENCE [MRNA] (ISOFORM 1)</scope>
    <source>
        <tissue>Parathyroid</tissue>
    </source>
</reference>
<reference key="4">
    <citation type="submission" date="2001-02" db="EMBL/GenBank/DDBJ databases">
        <title>Isolation of a family of hematopoietic-expressed four-transmembrane genes related to CD20 and Fc-epsilon-RI-beta.</title>
        <authorList>
            <person name="Hulett M.D."/>
            <person name="Pagler E."/>
            <person name="Hogarth P.M."/>
            <person name="Eyre H.J."/>
            <person name="Baker E."/>
            <person name="Crawford J."/>
            <person name="Sutherland G.R."/>
            <person name="Parish C.R."/>
        </authorList>
    </citation>
    <scope>NUCLEOTIDE SEQUENCE [MRNA]</scope>
</reference>
<reference key="5">
    <citation type="submission" date="1999-11" db="EMBL/GenBank/DDBJ databases">
        <title>Novel genes expressed in human dendritic cells.</title>
        <authorList>
            <person name="Li Y."/>
            <person name="Gu J."/>
            <person name="Peng Y."/>
            <person name="Qian B."/>
            <person name="Xu S."/>
            <person name="Han Z."/>
            <person name="Fu G."/>
            <person name="Chen Z."/>
        </authorList>
    </citation>
    <scope>NUCLEOTIDE SEQUENCE [MRNA] (ISOFORM 1)</scope>
    <source>
        <tissue>Dendritic cell</tissue>
    </source>
</reference>
<reference key="6">
    <citation type="journal article" date="2004" name="Nat. Genet.">
        <title>Complete sequencing and characterization of 21,243 full-length human cDNAs.</title>
        <authorList>
            <person name="Ota T."/>
            <person name="Suzuki Y."/>
            <person name="Nishikawa T."/>
            <person name="Otsuki T."/>
            <person name="Sugiyama T."/>
            <person name="Irie R."/>
            <person name="Wakamatsu A."/>
            <person name="Hayashi K."/>
            <person name="Sato H."/>
            <person name="Nagai K."/>
            <person name="Kimura K."/>
            <person name="Makita H."/>
            <person name="Sekine M."/>
            <person name="Obayashi M."/>
            <person name="Nishi T."/>
            <person name="Shibahara T."/>
            <person name="Tanaka T."/>
            <person name="Ishii S."/>
            <person name="Yamamoto J."/>
            <person name="Saito K."/>
            <person name="Kawai Y."/>
            <person name="Isono Y."/>
            <person name="Nakamura Y."/>
            <person name="Nagahari K."/>
            <person name="Murakami K."/>
            <person name="Yasuda T."/>
            <person name="Iwayanagi T."/>
            <person name="Wagatsuma M."/>
            <person name="Shiratori A."/>
            <person name="Sudo H."/>
            <person name="Hosoiri T."/>
            <person name="Kaku Y."/>
            <person name="Kodaira H."/>
            <person name="Kondo H."/>
            <person name="Sugawara M."/>
            <person name="Takahashi M."/>
            <person name="Kanda K."/>
            <person name="Yokoi T."/>
            <person name="Furuya T."/>
            <person name="Kikkawa E."/>
            <person name="Omura Y."/>
            <person name="Abe K."/>
            <person name="Kamihara K."/>
            <person name="Katsuta N."/>
            <person name="Sato K."/>
            <person name="Tanikawa M."/>
            <person name="Yamazaki M."/>
            <person name="Ninomiya K."/>
            <person name="Ishibashi T."/>
            <person name="Yamashita H."/>
            <person name="Murakawa K."/>
            <person name="Fujimori K."/>
            <person name="Tanai H."/>
            <person name="Kimata M."/>
            <person name="Watanabe M."/>
            <person name="Hiraoka S."/>
            <person name="Chiba Y."/>
            <person name="Ishida S."/>
            <person name="Ono Y."/>
            <person name="Takiguchi S."/>
            <person name="Watanabe S."/>
            <person name="Yosida M."/>
            <person name="Hotuta T."/>
            <person name="Kusano J."/>
            <person name="Kanehori K."/>
            <person name="Takahashi-Fujii A."/>
            <person name="Hara H."/>
            <person name="Tanase T.-O."/>
            <person name="Nomura Y."/>
            <person name="Togiya S."/>
            <person name="Komai F."/>
            <person name="Hara R."/>
            <person name="Takeuchi K."/>
            <person name="Arita M."/>
            <person name="Imose N."/>
            <person name="Musashino K."/>
            <person name="Yuuki H."/>
            <person name="Oshima A."/>
            <person name="Sasaki N."/>
            <person name="Aotsuka S."/>
            <person name="Yoshikawa Y."/>
            <person name="Matsunawa H."/>
            <person name="Ichihara T."/>
            <person name="Shiohata N."/>
            <person name="Sano S."/>
            <person name="Moriya S."/>
            <person name="Momiyama H."/>
            <person name="Satoh N."/>
            <person name="Takami S."/>
            <person name="Terashima Y."/>
            <person name="Suzuki O."/>
            <person name="Nakagawa S."/>
            <person name="Senoh A."/>
            <person name="Mizoguchi H."/>
            <person name="Goto Y."/>
            <person name="Shimizu F."/>
            <person name="Wakebe H."/>
            <person name="Hishigaki H."/>
            <person name="Watanabe T."/>
            <person name="Sugiyama A."/>
            <person name="Takemoto M."/>
            <person name="Kawakami B."/>
            <person name="Yamazaki M."/>
            <person name="Watanabe K."/>
            <person name="Kumagai A."/>
            <person name="Itakura S."/>
            <person name="Fukuzumi Y."/>
            <person name="Fujimori Y."/>
            <person name="Komiyama M."/>
            <person name="Tashiro H."/>
            <person name="Tanigami A."/>
            <person name="Fujiwara T."/>
            <person name="Ono T."/>
            <person name="Yamada K."/>
            <person name="Fujii Y."/>
            <person name="Ozaki K."/>
            <person name="Hirao M."/>
            <person name="Ohmori Y."/>
            <person name="Kawabata A."/>
            <person name="Hikiji T."/>
            <person name="Kobatake N."/>
            <person name="Inagaki H."/>
            <person name="Ikema Y."/>
            <person name="Okamoto S."/>
            <person name="Okitani R."/>
            <person name="Kawakami T."/>
            <person name="Noguchi S."/>
            <person name="Itoh T."/>
            <person name="Shigeta K."/>
            <person name="Senba T."/>
            <person name="Matsumura K."/>
            <person name="Nakajima Y."/>
            <person name="Mizuno T."/>
            <person name="Morinaga M."/>
            <person name="Sasaki M."/>
            <person name="Togashi T."/>
            <person name="Oyama M."/>
            <person name="Hata H."/>
            <person name="Watanabe M."/>
            <person name="Komatsu T."/>
            <person name="Mizushima-Sugano J."/>
            <person name="Satoh T."/>
            <person name="Shirai Y."/>
            <person name="Takahashi Y."/>
            <person name="Nakagawa K."/>
            <person name="Okumura K."/>
            <person name="Nagase T."/>
            <person name="Nomura N."/>
            <person name="Kikuchi H."/>
            <person name="Masuho Y."/>
            <person name="Yamashita R."/>
            <person name="Nakai K."/>
            <person name="Yada T."/>
            <person name="Nakamura Y."/>
            <person name="Ohara O."/>
            <person name="Isogai T."/>
            <person name="Sugano S."/>
        </authorList>
    </citation>
    <scope>NUCLEOTIDE SEQUENCE [LARGE SCALE MRNA] (ISOFORMS 1 AND 2)</scope>
    <source>
        <tissue>Placenta</tissue>
        <tissue>Umbilical cord blood</tissue>
    </source>
</reference>
<reference key="7">
    <citation type="submission" date="2004-06" db="EMBL/GenBank/DDBJ databases">
        <title>Cloning of human full open reading frames in Gateway(TM) system entry vector (pDONR201).</title>
        <authorList>
            <person name="Ebert L."/>
            <person name="Schick M."/>
            <person name="Neubert P."/>
            <person name="Schatten R."/>
            <person name="Henze S."/>
            <person name="Korn B."/>
        </authorList>
    </citation>
    <scope>NUCLEOTIDE SEQUENCE [LARGE SCALE MRNA]</scope>
</reference>
<reference key="8">
    <citation type="journal article" date="2006" name="Nature">
        <title>Human chromosome 11 DNA sequence and analysis including novel gene identification.</title>
        <authorList>
            <person name="Taylor T.D."/>
            <person name="Noguchi H."/>
            <person name="Totoki Y."/>
            <person name="Toyoda A."/>
            <person name="Kuroki Y."/>
            <person name="Dewar K."/>
            <person name="Lloyd C."/>
            <person name="Itoh T."/>
            <person name="Takeda T."/>
            <person name="Kim D.-W."/>
            <person name="She X."/>
            <person name="Barlow K.F."/>
            <person name="Bloom T."/>
            <person name="Bruford E."/>
            <person name="Chang J.L."/>
            <person name="Cuomo C.A."/>
            <person name="Eichler E."/>
            <person name="FitzGerald M.G."/>
            <person name="Jaffe D.B."/>
            <person name="LaButti K."/>
            <person name="Nicol R."/>
            <person name="Park H.-S."/>
            <person name="Seaman C."/>
            <person name="Sougnez C."/>
            <person name="Yang X."/>
            <person name="Zimmer A.R."/>
            <person name="Zody M.C."/>
            <person name="Birren B.W."/>
            <person name="Nusbaum C."/>
            <person name="Fujiyama A."/>
            <person name="Hattori M."/>
            <person name="Rogers J."/>
            <person name="Lander E.S."/>
            <person name="Sakaki Y."/>
        </authorList>
    </citation>
    <scope>NUCLEOTIDE SEQUENCE [LARGE SCALE GENOMIC DNA]</scope>
</reference>
<reference key="9">
    <citation type="submission" date="2005-07" db="EMBL/GenBank/DDBJ databases">
        <authorList>
            <person name="Mural R.J."/>
            <person name="Istrail S."/>
            <person name="Sutton G.G."/>
            <person name="Florea L."/>
            <person name="Halpern A.L."/>
            <person name="Mobarry C.M."/>
            <person name="Lippert R."/>
            <person name="Walenz B."/>
            <person name="Shatkay H."/>
            <person name="Dew I."/>
            <person name="Miller J.R."/>
            <person name="Flanigan M.J."/>
            <person name="Edwards N.J."/>
            <person name="Bolanos R."/>
            <person name="Fasulo D."/>
            <person name="Halldorsson B.V."/>
            <person name="Hannenhalli S."/>
            <person name="Turner R."/>
            <person name="Yooseph S."/>
            <person name="Lu F."/>
            <person name="Nusskern D.R."/>
            <person name="Shue B.C."/>
            <person name="Zheng X.H."/>
            <person name="Zhong F."/>
            <person name="Delcher A.L."/>
            <person name="Huson D.H."/>
            <person name="Kravitz S.A."/>
            <person name="Mouchard L."/>
            <person name="Reinert K."/>
            <person name="Remington K.A."/>
            <person name="Clark A.G."/>
            <person name="Waterman M.S."/>
            <person name="Eichler E.E."/>
            <person name="Adams M.D."/>
            <person name="Hunkapiller M.W."/>
            <person name="Myers E.W."/>
            <person name="Venter J.C."/>
        </authorList>
    </citation>
    <scope>NUCLEOTIDE SEQUENCE [LARGE SCALE GENOMIC DNA]</scope>
</reference>
<reference key="10">
    <citation type="journal article" date="2004" name="Genome Res.">
        <title>The status, quality, and expansion of the NIH full-length cDNA project: the Mammalian Gene Collection (MGC).</title>
        <authorList>
            <consortium name="The MGC Project Team"/>
        </authorList>
    </citation>
    <scope>NUCLEOTIDE SEQUENCE [LARGE SCALE MRNA] (ISOFORM 1)</scope>
    <source>
        <tissue>Placenta</tissue>
    </source>
</reference>
<protein>
    <recommendedName>
        <fullName>Membrane-spanning 4-domains subfamily A member 7</fullName>
    </recommendedName>
    <alternativeName>
        <fullName>CD20 antigen-like 4</fullName>
    </alternativeName>
    <alternativeName>
        <fullName>CD20/FC-epsilon-RI-beta family member 4</fullName>
    </alternativeName>
    <alternativeName>
        <fullName>Four-span transmembrane protein 2</fullName>
    </alternativeName>
</protein>
<organism>
    <name type="scientific">Homo sapiens</name>
    <name type="common">Human</name>
    <dbReference type="NCBI Taxonomy" id="9606"/>
    <lineage>
        <taxon>Eukaryota</taxon>
        <taxon>Metazoa</taxon>
        <taxon>Chordata</taxon>
        <taxon>Craniata</taxon>
        <taxon>Vertebrata</taxon>
        <taxon>Euteleostomi</taxon>
        <taxon>Mammalia</taxon>
        <taxon>Eutheria</taxon>
        <taxon>Euarchontoglires</taxon>
        <taxon>Primates</taxon>
        <taxon>Haplorrhini</taxon>
        <taxon>Catarrhini</taxon>
        <taxon>Hominidae</taxon>
        <taxon>Homo</taxon>
    </lineage>
</organism>
<proteinExistence type="evidence at protein level"/>
<feature type="chain" id="PRO_0000158643" description="Membrane-spanning 4-domains subfamily A member 7">
    <location>
        <begin position="1"/>
        <end position="240"/>
    </location>
</feature>
<feature type="topological domain" description="Cytoplasmic" evidence="1">
    <location>
        <begin position="1"/>
        <end position="47"/>
    </location>
</feature>
<feature type="transmembrane region" description="Helical" evidence="1">
    <location>
        <begin position="48"/>
        <end position="68"/>
    </location>
</feature>
<feature type="topological domain" description="Extracellular" evidence="1">
    <location>
        <begin position="69"/>
        <end position="83"/>
    </location>
</feature>
<feature type="transmembrane region" description="Helical" evidence="1">
    <location>
        <begin position="84"/>
        <end position="104"/>
    </location>
</feature>
<feature type="topological domain" description="Cytoplasmic" evidence="1">
    <location>
        <begin position="105"/>
        <end position="121"/>
    </location>
</feature>
<feature type="transmembrane region" description="Helical" evidence="1">
    <location>
        <begin position="122"/>
        <end position="142"/>
    </location>
</feature>
<feature type="topological domain" description="Extracellular" evidence="1">
    <location>
        <begin position="143"/>
        <end position="178"/>
    </location>
</feature>
<feature type="transmembrane region" description="Helical" evidence="1">
    <location>
        <begin position="179"/>
        <end position="199"/>
    </location>
</feature>
<feature type="topological domain" description="Cytoplasmic" evidence="1">
    <location>
        <begin position="200"/>
        <end position="240"/>
    </location>
</feature>
<feature type="region of interest" description="Disordered" evidence="2">
    <location>
        <begin position="218"/>
        <end position="240"/>
    </location>
</feature>
<feature type="splice variant" id="VSP_042009" description="In isoform 2." evidence="3">
    <location>
        <begin position="50"/>
        <end position="94"/>
    </location>
</feature>
<feature type="sequence variant" id="VAR_053520" description="In dbSNP:rs2233241.">
    <original>E</original>
    <variation>K</variation>
    <location>
        <position position="34"/>
    </location>
</feature>
<feature type="sequence variant" id="VAR_053521" description="In dbSNP:rs2233249.">
    <original>P</original>
    <variation>H</variation>
    <location>
        <position position="112"/>
    </location>
</feature>
<feature type="sequence variant" id="VAR_053522" description="In dbSNP:rs2233251.">
    <original>S</original>
    <variation>F</variation>
    <location>
        <position position="157"/>
    </location>
</feature>
<gene>
    <name type="primary">MS4A7</name>
    <name type="synonym">4SPAN2</name>
    <name type="synonym">CD20L4</name>
    <name type="synonym">CFFM4</name>
</gene>
<comment type="function">
    <text>May be involved in signal transduction as a component of a multimeric receptor complex.</text>
</comment>
<comment type="interaction">
    <interactant intactId="EBI-721391">
        <id>Q9GZW8</id>
    </interactant>
    <interactant intactId="EBI-307924">
        <id>P21854</id>
        <label>CD72</label>
    </interactant>
    <organismsDiffer>false</organismsDiffer>
    <experiments>3</experiments>
</comment>
<comment type="interaction">
    <interactant intactId="EBI-721391">
        <id>Q9GZW8</id>
    </interactant>
    <interactant intactId="EBI-10305400">
        <id>Q8N682</id>
        <label>DRAM1</label>
    </interactant>
    <organismsDiffer>false</organismsDiffer>
    <experiments>3</experiments>
</comment>
<comment type="interaction">
    <interactant intactId="EBI-721391">
        <id>Q9GZW8</id>
    </interactant>
    <interactant intactId="EBI-4319440">
        <id>P54849</id>
        <label>EMP1</label>
    </interactant>
    <organismsDiffer>false</organismsDiffer>
    <experiments>3</experiments>
</comment>
<comment type="interaction">
    <interactant intactId="EBI-721391">
        <id>Q9GZW8</id>
    </interactant>
    <interactant intactId="EBI-720480">
        <id>P24593</id>
        <label>IGFBP5</label>
    </interactant>
    <organismsDiffer>false</organismsDiffer>
    <experiments>3</experiments>
</comment>
<comment type="interaction">
    <interactant intactId="EBI-721391">
        <id>Q9GZW8</id>
    </interactant>
    <interactant intactId="EBI-300173">
        <id>P05107</id>
        <label>ITGB2</label>
    </interactant>
    <organismsDiffer>false</organismsDiffer>
    <experiments>3</experiments>
</comment>
<comment type="interaction">
    <interactant intactId="EBI-721391">
        <id>Q9GZW8</id>
    </interactant>
    <interactant intactId="EBI-8070286">
        <id>O43561-2</id>
        <label>LAT</label>
    </interactant>
    <organismsDiffer>false</organismsDiffer>
    <experiments>3</experiments>
</comment>
<comment type="interaction">
    <interactant intactId="EBI-721391">
        <id>Q9GZW8</id>
    </interactant>
    <interactant intactId="EBI-692836">
        <id>P26678</id>
        <label>PLN</label>
    </interactant>
    <organismsDiffer>false</organismsDiffer>
    <experiments>3</experiments>
</comment>
<comment type="interaction">
    <interactant intactId="EBI-721391">
        <id>Q9GZW8</id>
    </interactant>
    <interactant intactId="EBI-2845982">
        <id>Q01453</id>
        <label>PMP22</label>
    </interactant>
    <organismsDiffer>false</organismsDiffer>
    <experiments>3</experiments>
</comment>
<comment type="subcellular location">
    <subcellularLocation>
        <location>Membrane</location>
        <topology>Multi-pass membrane protein</topology>
    </subcellularLocation>
</comment>
<comment type="alternative products">
    <event type="alternative splicing"/>
    <isoform>
        <id>Q9GZW8-1</id>
        <name>1</name>
        <sequence type="displayed"/>
    </isoform>
    <isoform>
        <id>Q9GZW8-2</id>
        <name>2</name>
        <sequence type="described" ref="VSP_042009"/>
    </isoform>
</comment>
<comment type="tissue specificity">
    <text>Ubiquitous expression in normal tissues. Expression is more elevated in adult liver, lung, spleen, and heart than in their fetal counterparts, and is higher in normal tissues than in the cancerous tissue or cell lines. Low levels of expression were detected in the promonocytic stage, whereas high levels of expression were detected in mature monocytes.</text>
</comment>
<comment type="similarity">
    <text evidence="4">Belongs to the MS4A family.</text>
</comment>
<keyword id="KW-0025">Alternative splicing</keyword>
<keyword id="KW-0472">Membrane</keyword>
<keyword id="KW-1267">Proteomics identification</keyword>
<keyword id="KW-0675">Receptor</keyword>
<keyword id="KW-1185">Reference proteome</keyword>
<keyword id="KW-0812">Transmembrane</keyword>
<keyword id="KW-1133">Transmembrane helix</keyword>
<dbReference type="EMBL" id="AB026043">
    <property type="protein sequence ID" value="BAB18755.1"/>
    <property type="molecule type" value="mRNA"/>
</dbReference>
<dbReference type="EMBL" id="AF309653">
    <property type="protein sequence ID" value="AAG30930.1"/>
    <property type="molecule type" value="mRNA"/>
</dbReference>
<dbReference type="EMBL" id="AF237916">
    <property type="protein sequence ID" value="AAK37599.1"/>
    <property type="molecule type" value="mRNA"/>
</dbReference>
<dbReference type="EMBL" id="AF350501">
    <property type="protein sequence ID" value="AAL56221.1"/>
    <property type="molecule type" value="mRNA"/>
</dbReference>
<dbReference type="EMBL" id="AF201951">
    <property type="protein sequence ID" value="AAF17243.1"/>
    <property type="molecule type" value="mRNA"/>
</dbReference>
<dbReference type="EMBL" id="AK075106">
    <property type="protein sequence ID" value="BAC11405.1"/>
    <property type="molecule type" value="mRNA"/>
</dbReference>
<dbReference type="EMBL" id="AK297027">
    <property type="protein sequence ID" value="BAG59556.1"/>
    <property type="molecule type" value="mRNA"/>
</dbReference>
<dbReference type="EMBL" id="CR457187">
    <property type="protein sequence ID" value="CAG33468.1"/>
    <property type="molecule type" value="mRNA"/>
</dbReference>
<dbReference type="EMBL" id="AP003127">
    <property type="status" value="NOT_ANNOTATED_CDS"/>
    <property type="molecule type" value="Genomic_DNA"/>
</dbReference>
<dbReference type="EMBL" id="CH471076">
    <property type="protein sequence ID" value="EAW73878.1"/>
    <property type="molecule type" value="Genomic_DNA"/>
</dbReference>
<dbReference type="EMBL" id="CH471076">
    <property type="protein sequence ID" value="EAW73879.1"/>
    <property type="molecule type" value="Genomic_DNA"/>
</dbReference>
<dbReference type="EMBL" id="BC020673">
    <property type="protein sequence ID" value="AAH20673.1"/>
    <property type="molecule type" value="mRNA"/>
</dbReference>
<dbReference type="CCDS" id="CCDS7985.1">
    <molecule id="Q9GZW8-1"/>
</dbReference>
<dbReference type="CCDS" id="CCDS7986.1">
    <molecule id="Q9GZW8-2"/>
</dbReference>
<dbReference type="RefSeq" id="NP_067024.1">
    <molecule id="Q9GZW8-1"/>
    <property type="nucleotide sequence ID" value="NM_021201.5"/>
</dbReference>
<dbReference type="RefSeq" id="NP_996821.1">
    <molecule id="Q9GZW8-2"/>
    <property type="nucleotide sequence ID" value="NM_206938.2"/>
</dbReference>
<dbReference type="RefSeq" id="NP_996822.1">
    <molecule id="Q9GZW8-1"/>
    <property type="nucleotide sequence ID" value="NM_206939.2"/>
</dbReference>
<dbReference type="RefSeq" id="NP_996823.1">
    <molecule id="Q9GZW8-2"/>
    <property type="nucleotide sequence ID" value="NM_206940.2"/>
</dbReference>
<dbReference type="SMR" id="Q9GZW8"/>
<dbReference type="BioGRID" id="121808">
    <property type="interactions" value="15"/>
</dbReference>
<dbReference type="FunCoup" id="Q9GZW8">
    <property type="interactions" value="129"/>
</dbReference>
<dbReference type="IntAct" id="Q9GZW8">
    <property type="interactions" value="12"/>
</dbReference>
<dbReference type="STRING" id="9606.ENSP00000300184"/>
<dbReference type="iPTMnet" id="Q9GZW8"/>
<dbReference type="PhosphoSitePlus" id="Q9GZW8"/>
<dbReference type="BioMuta" id="MS4A7"/>
<dbReference type="DMDM" id="29611829"/>
<dbReference type="MassIVE" id="Q9GZW8"/>
<dbReference type="PaxDb" id="9606-ENSP00000300184"/>
<dbReference type="PeptideAtlas" id="Q9GZW8"/>
<dbReference type="Antibodypedia" id="2586">
    <property type="antibodies" value="137 antibodies from 22 providers"/>
</dbReference>
<dbReference type="DNASU" id="58475"/>
<dbReference type="Ensembl" id="ENST00000300184.8">
    <molecule id="Q9GZW8-1"/>
    <property type="protein sequence ID" value="ENSP00000300184.3"/>
    <property type="gene ID" value="ENSG00000166927.13"/>
</dbReference>
<dbReference type="Ensembl" id="ENST00000358246.5">
    <molecule id="Q9GZW8-2"/>
    <property type="protein sequence ID" value="ENSP00000350983.1"/>
    <property type="gene ID" value="ENSG00000166927.13"/>
</dbReference>
<dbReference type="Ensembl" id="ENST00000534016.5">
    <molecule id="Q9GZW8-2"/>
    <property type="protein sequence ID" value="ENSP00000434637.1"/>
    <property type="gene ID" value="ENSG00000166927.13"/>
</dbReference>
<dbReference type="GeneID" id="58475"/>
<dbReference type="KEGG" id="hsa:58475"/>
<dbReference type="MANE-Select" id="ENST00000300184.8">
    <property type="protein sequence ID" value="ENSP00000300184.3"/>
    <property type="RefSeq nucleotide sequence ID" value="NM_021201.5"/>
    <property type="RefSeq protein sequence ID" value="NP_067024.1"/>
</dbReference>
<dbReference type="UCSC" id="uc001npf.4">
    <molecule id="Q9GZW8-1"/>
    <property type="organism name" value="human"/>
</dbReference>
<dbReference type="AGR" id="HGNC:13378"/>
<dbReference type="CTD" id="58475"/>
<dbReference type="DisGeNET" id="58475"/>
<dbReference type="GeneCards" id="MS4A7"/>
<dbReference type="HGNC" id="HGNC:13378">
    <property type="gene designation" value="MS4A7"/>
</dbReference>
<dbReference type="HPA" id="ENSG00000166927">
    <property type="expression patterns" value="Tissue enhanced (lymphoid)"/>
</dbReference>
<dbReference type="MIM" id="606502">
    <property type="type" value="gene"/>
</dbReference>
<dbReference type="neXtProt" id="NX_Q9GZW8"/>
<dbReference type="OpenTargets" id="ENSG00000166927"/>
<dbReference type="PharmGKB" id="PA31124"/>
<dbReference type="VEuPathDB" id="HostDB:ENSG00000166927"/>
<dbReference type="eggNOG" id="ENOG502RP28">
    <property type="taxonomic scope" value="Eukaryota"/>
</dbReference>
<dbReference type="GeneTree" id="ENSGT00940000162779"/>
<dbReference type="HOGENOM" id="CLU_089673_0_0_1"/>
<dbReference type="InParanoid" id="Q9GZW8"/>
<dbReference type="OMA" id="PYSSHFN"/>
<dbReference type="OrthoDB" id="9837183at2759"/>
<dbReference type="PAN-GO" id="Q9GZW8">
    <property type="GO annotations" value="3 GO annotations based on evolutionary models"/>
</dbReference>
<dbReference type="PhylomeDB" id="Q9GZW8"/>
<dbReference type="TreeFam" id="TF335157"/>
<dbReference type="PathwayCommons" id="Q9GZW8"/>
<dbReference type="SignaLink" id="Q9GZW8"/>
<dbReference type="BioGRID-ORCS" id="58475">
    <property type="hits" value="23 hits in 1125 CRISPR screens"/>
</dbReference>
<dbReference type="ChiTaRS" id="MS4A7">
    <property type="organism name" value="human"/>
</dbReference>
<dbReference type="GeneWiki" id="MS4A7"/>
<dbReference type="GenomeRNAi" id="58475"/>
<dbReference type="Pharos" id="Q9GZW8">
    <property type="development level" value="Tdark"/>
</dbReference>
<dbReference type="PRO" id="PR:Q9GZW8"/>
<dbReference type="Proteomes" id="UP000005640">
    <property type="component" value="Chromosome 11"/>
</dbReference>
<dbReference type="RNAct" id="Q9GZW8">
    <property type="molecule type" value="protein"/>
</dbReference>
<dbReference type="Bgee" id="ENSG00000166927">
    <property type="expression patterns" value="Expressed in monocyte and 139 other cell types or tissues"/>
</dbReference>
<dbReference type="ExpressionAtlas" id="Q9GZW8">
    <property type="expression patterns" value="baseline and differential"/>
</dbReference>
<dbReference type="GO" id="GO:0005886">
    <property type="term" value="C:plasma membrane"/>
    <property type="evidence" value="ECO:0000318"/>
    <property type="project" value="GO_Central"/>
</dbReference>
<dbReference type="GO" id="GO:0005802">
    <property type="term" value="C:trans-Golgi network"/>
    <property type="evidence" value="ECO:0000314"/>
    <property type="project" value="ARUK-UCL"/>
</dbReference>
<dbReference type="GO" id="GO:0007166">
    <property type="term" value="P:cell surface receptor signaling pathway"/>
    <property type="evidence" value="ECO:0000318"/>
    <property type="project" value="GO_Central"/>
</dbReference>
<dbReference type="InterPro" id="IPR007237">
    <property type="entry name" value="CD20-like"/>
</dbReference>
<dbReference type="InterPro" id="IPR030417">
    <property type="entry name" value="MS4A"/>
</dbReference>
<dbReference type="PANTHER" id="PTHR23320:SF8">
    <property type="entry name" value="MEMBRANE-SPANNING 4-DOMAINS SUBFAMILY A MEMBER 7"/>
    <property type="match status" value="1"/>
</dbReference>
<dbReference type="PANTHER" id="PTHR23320">
    <property type="entry name" value="MEMBRANE-SPANNING 4-DOMAINS SUBFAMILY A MS4A -RELATED"/>
    <property type="match status" value="1"/>
</dbReference>
<dbReference type="Pfam" id="PF04103">
    <property type="entry name" value="CD20"/>
    <property type="match status" value="1"/>
</dbReference>
<evidence type="ECO:0000255" key="1"/>
<evidence type="ECO:0000256" key="2">
    <source>
        <dbReference type="SAM" id="MobiDB-lite"/>
    </source>
</evidence>
<evidence type="ECO:0000303" key="3">
    <source>
    </source>
</evidence>
<evidence type="ECO:0000305" key="4"/>
<name>MS4A7_HUMAN</name>
<accession>Q9GZW8</accession>
<accession>A6NP53</accession>
<accession>Q6IAG8</accession>